<organism>
    <name type="scientific">Dictyostelium discoideum</name>
    <name type="common">Social amoeba</name>
    <dbReference type="NCBI Taxonomy" id="44689"/>
    <lineage>
        <taxon>Eukaryota</taxon>
        <taxon>Amoebozoa</taxon>
        <taxon>Evosea</taxon>
        <taxon>Eumycetozoa</taxon>
        <taxon>Dictyostelia</taxon>
        <taxon>Dictyosteliales</taxon>
        <taxon>Dictyosteliaceae</taxon>
        <taxon>Dictyostelium</taxon>
    </lineage>
</organism>
<sequence length="331" mass="37032">MRPISLRLHERPITQVLFNREGDLLFVAAKDKLVSLWYTTNGERIGSYQCGGVVYSIDVSQDSKYLITASADAKARVWDVSSGRQLDSTDFEVSARSIEFSQGDKQILVVTDQVMGCQAKIHVFDFDKDEVRKLNKSYTLPSPQCKITQATWGPLNKTIFASCEDGAVRIYCTEKRELIKTILDHNKLVTRIEWTKHRIMFMTCSKDGTAKLYDTKTLKLLRTFDTGRPINAAGISPLKPHVILGGGQSAESVTTTKVDASQFKVRFFHIVYGEELGGLIGHIGPVHSICFTPDGKTFATGGEEGLVQVNHLDESYFEFDDDLVYNPPVQH</sequence>
<comment type="function">
    <text evidence="1">Component of the eukaryotic translation initiation factor 3 (eIF-3) complex, which is involved in protein synthesis of a specialized repertoire of mRNAs and, together with other initiation factors, stimulates binding of mRNA and methionyl-tRNAi to the 40S ribosome. The eIF-3 complex specifically targets and initiates translation of a subset of mRNAs involved in cell proliferation.</text>
</comment>
<comment type="subunit">
    <text evidence="1">Component of the eukaryotic translation initiation factor 3 (eIF-3) complex.</text>
</comment>
<comment type="subcellular location">
    <subcellularLocation>
        <location evidence="1">Cytoplasm</location>
    </subcellularLocation>
</comment>
<comment type="similarity">
    <text evidence="1">Belongs to the eIF-3 subunit I family.</text>
</comment>
<reference key="1">
    <citation type="journal article" date="2005" name="Nature">
        <title>The genome of the social amoeba Dictyostelium discoideum.</title>
        <authorList>
            <person name="Eichinger L."/>
            <person name="Pachebat J.A."/>
            <person name="Gloeckner G."/>
            <person name="Rajandream M.A."/>
            <person name="Sucgang R."/>
            <person name="Berriman M."/>
            <person name="Song J."/>
            <person name="Olsen R."/>
            <person name="Szafranski K."/>
            <person name="Xu Q."/>
            <person name="Tunggal B."/>
            <person name="Kummerfeld S."/>
            <person name="Madera M."/>
            <person name="Konfortov B.A."/>
            <person name="Rivero F."/>
            <person name="Bankier A.T."/>
            <person name="Lehmann R."/>
            <person name="Hamlin N."/>
            <person name="Davies R."/>
            <person name="Gaudet P."/>
            <person name="Fey P."/>
            <person name="Pilcher K."/>
            <person name="Chen G."/>
            <person name="Saunders D."/>
            <person name="Sodergren E.J."/>
            <person name="Davis P."/>
            <person name="Kerhornou A."/>
            <person name="Nie X."/>
            <person name="Hall N."/>
            <person name="Anjard C."/>
            <person name="Hemphill L."/>
            <person name="Bason N."/>
            <person name="Farbrother P."/>
            <person name="Desany B."/>
            <person name="Just E."/>
            <person name="Morio T."/>
            <person name="Rost R."/>
            <person name="Churcher C.M."/>
            <person name="Cooper J."/>
            <person name="Haydock S."/>
            <person name="van Driessche N."/>
            <person name="Cronin A."/>
            <person name="Goodhead I."/>
            <person name="Muzny D.M."/>
            <person name="Mourier T."/>
            <person name="Pain A."/>
            <person name="Lu M."/>
            <person name="Harper D."/>
            <person name="Lindsay R."/>
            <person name="Hauser H."/>
            <person name="James K.D."/>
            <person name="Quiles M."/>
            <person name="Madan Babu M."/>
            <person name="Saito T."/>
            <person name="Buchrieser C."/>
            <person name="Wardroper A."/>
            <person name="Felder M."/>
            <person name="Thangavelu M."/>
            <person name="Johnson D."/>
            <person name="Knights A."/>
            <person name="Loulseged H."/>
            <person name="Mungall K.L."/>
            <person name="Oliver K."/>
            <person name="Price C."/>
            <person name="Quail M.A."/>
            <person name="Urushihara H."/>
            <person name="Hernandez J."/>
            <person name="Rabbinowitsch E."/>
            <person name="Steffen D."/>
            <person name="Sanders M."/>
            <person name="Ma J."/>
            <person name="Kohara Y."/>
            <person name="Sharp S."/>
            <person name="Simmonds M.N."/>
            <person name="Spiegler S."/>
            <person name="Tivey A."/>
            <person name="Sugano S."/>
            <person name="White B."/>
            <person name="Walker D."/>
            <person name="Woodward J.R."/>
            <person name="Winckler T."/>
            <person name="Tanaka Y."/>
            <person name="Shaulsky G."/>
            <person name="Schleicher M."/>
            <person name="Weinstock G.M."/>
            <person name="Rosenthal A."/>
            <person name="Cox E.C."/>
            <person name="Chisholm R.L."/>
            <person name="Gibbs R.A."/>
            <person name="Loomis W.F."/>
            <person name="Platzer M."/>
            <person name="Kay R.R."/>
            <person name="Williams J.G."/>
            <person name="Dear P.H."/>
            <person name="Noegel A.A."/>
            <person name="Barrell B.G."/>
            <person name="Kuspa A."/>
        </authorList>
    </citation>
    <scope>NUCLEOTIDE SEQUENCE [LARGE SCALE GENOMIC DNA]</scope>
    <source>
        <strain>AX4</strain>
    </source>
</reference>
<evidence type="ECO:0000255" key="1">
    <source>
        <dbReference type="HAMAP-Rule" id="MF_03008"/>
    </source>
</evidence>
<keyword id="KW-0963">Cytoplasm</keyword>
<keyword id="KW-0396">Initiation factor</keyword>
<keyword id="KW-0648">Protein biosynthesis</keyword>
<keyword id="KW-1185">Reference proteome</keyword>
<keyword id="KW-0677">Repeat</keyword>
<keyword id="KW-0853">WD repeat</keyword>
<protein>
    <recommendedName>
        <fullName evidence="1">Eukaryotic translation initiation factor 3 subunit I</fullName>
        <shortName evidence="1">eIF3i</shortName>
    </recommendedName>
    <alternativeName>
        <fullName evidence="1">Eukaryotic translation initiation factor 3 subunit 2</fullName>
    </alternativeName>
    <alternativeName>
        <fullName evidence="1">eIF-3-beta</fullName>
    </alternativeName>
</protein>
<dbReference type="EMBL" id="AAFI02000079">
    <property type="protein sequence ID" value="EAL64679.1"/>
    <property type="molecule type" value="Genomic_DNA"/>
</dbReference>
<dbReference type="RefSeq" id="XP_638213.1">
    <property type="nucleotide sequence ID" value="XM_633121.1"/>
</dbReference>
<dbReference type="SMR" id="Q54MT0"/>
<dbReference type="FunCoup" id="Q54MT0">
    <property type="interactions" value="947"/>
</dbReference>
<dbReference type="STRING" id="44689.Q54MT0"/>
<dbReference type="PaxDb" id="44689-DDB0233910"/>
<dbReference type="EnsemblProtists" id="EAL64679">
    <property type="protein sequence ID" value="EAL64679"/>
    <property type="gene ID" value="DDB_G0285683"/>
</dbReference>
<dbReference type="GeneID" id="8625261"/>
<dbReference type="KEGG" id="ddi:DDB_G0285683"/>
<dbReference type="dictyBase" id="DDB_G0285683">
    <property type="gene designation" value="eif3I"/>
</dbReference>
<dbReference type="VEuPathDB" id="AmoebaDB:DDB_G0285683"/>
<dbReference type="eggNOG" id="KOG0643">
    <property type="taxonomic scope" value="Eukaryota"/>
</dbReference>
<dbReference type="HOGENOM" id="CLU_043845_0_1_1"/>
<dbReference type="InParanoid" id="Q54MT0"/>
<dbReference type="OMA" id="VWFSHNG"/>
<dbReference type="PhylomeDB" id="Q54MT0"/>
<dbReference type="Reactome" id="R-DDI-156827">
    <property type="pathway name" value="L13a-mediated translational silencing of Ceruloplasmin expression"/>
</dbReference>
<dbReference type="Reactome" id="R-DDI-72689">
    <property type="pathway name" value="Formation of a pool of free 40S subunits"/>
</dbReference>
<dbReference type="Reactome" id="R-DDI-72695">
    <property type="pathway name" value="Formation of the ternary complex, and subsequently, the 43S complex"/>
</dbReference>
<dbReference type="Reactome" id="R-DDI-72702">
    <property type="pathway name" value="Ribosomal scanning and start codon recognition"/>
</dbReference>
<dbReference type="PRO" id="PR:Q54MT0"/>
<dbReference type="Proteomes" id="UP000002195">
    <property type="component" value="Chromosome 4"/>
</dbReference>
<dbReference type="GO" id="GO:0016282">
    <property type="term" value="C:eukaryotic 43S preinitiation complex"/>
    <property type="evidence" value="ECO:0007669"/>
    <property type="project" value="UniProtKB-UniRule"/>
</dbReference>
<dbReference type="GO" id="GO:0033290">
    <property type="term" value="C:eukaryotic 48S preinitiation complex"/>
    <property type="evidence" value="ECO:0007669"/>
    <property type="project" value="UniProtKB-UniRule"/>
</dbReference>
<dbReference type="GO" id="GO:0005852">
    <property type="term" value="C:eukaryotic translation initiation factor 3 complex"/>
    <property type="evidence" value="ECO:0000250"/>
    <property type="project" value="dictyBase"/>
</dbReference>
<dbReference type="GO" id="GO:0071541">
    <property type="term" value="C:eukaryotic translation initiation factor 3 complex, eIF3m"/>
    <property type="evidence" value="ECO:0000318"/>
    <property type="project" value="GO_Central"/>
</dbReference>
<dbReference type="GO" id="GO:0045335">
    <property type="term" value="C:phagocytic vesicle"/>
    <property type="evidence" value="ECO:0007005"/>
    <property type="project" value="dictyBase"/>
</dbReference>
<dbReference type="GO" id="GO:0003723">
    <property type="term" value="F:RNA binding"/>
    <property type="evidence" value="ECO:0000318"/>
    <property type="project" value="GO_Central"/>
</dbReference>
<dbReference type="GO" id="GO:0003743">
    <property type="term" value="F:translation initiation factor activity"/>
    <property type="evidence" value="ECO:0000318"/>
    <property type="project" value="GO_Central"/>
</dbReference>
<dbReference type="GO" id="GO:0002183">
    <property type="term" value="P:cytoplasmic translational initiation"/>
    <property type="evidence" value="ECO:0000318"/>
    <property type="project" value="GO_Central"/>
</dbReference>
<dbReference type="GO" id="GO:0001732">
    <property type="term" value="P:formation of cytoplasmic translation initiation complex"/>
    <property type="evidence" value="ECO:0007669"/>
    <property type="project" value="UniProtKB-UniRule"/>
</dbReference>
<dbReference type="Gene3D" id="2.130.10.10">
    <property type="entry name" value="YVTN repeat-like/Quinoprotein amine dehydrogenase"/>
    <property type="match status" value="1"/>
</dbReference>
<dbReference type="HAMAP" id="MF_03008">
    <property type="entry name" value="eIF3i"/>
    <property type="match status" value="1"/>
</dbReference>
<dbReference type="InterPro" id="IPR027525">
    <property type="entry name" value="eIF3i"/>
</dbReference>
<dbReference type="InterPro" id="IPR015943">
    <property type="entry name" value="WD40/YVTN_repeat-like_dom_sf"/>
</dbReference>
<dbReference type="InterPro" id="IPR019775">
    <property type="entry name" value="WD40_repeat_CS"/>
</dbReference>
<dbReference type="InterPro" id="IPR036322">
    <property type="entry name" value="WD40_repeat_dom_sf"/>
</dbReference>
<dbReference type="InterPro" id="IPR001680">
    <property type="entry name" value="WD40_rpt"/>
</dbReference>
<dbReference type="PANTHER" id="PTHR19877">
    <property type="entry name" value="EUKARYOTIC TRANSLATION INITIATION FACTOR 3 SUBUNIT I"/>
    <property type="match status" value="1"/>
</dbReference>
<dbReference type="PANTHER" id="PTHR19877:SF1">
    <property type="entry name" value="EUKARYOTIC TRANSLATION INITIATION FACTOR 3 SUBUNIT I"/>
    <property type="match status" value="1"/>
</dbReference>
<dbReference type="Pfam" id="PF24805">
    <property type="entry name" value="EIF3I"/>
    <property type="match status" value="1"/>
</dbReference>
<dbReference type="SMART" id="SM00320">
    <property type="entry name" value="WD40"/>
    <property type="match status" value="5"/>
</dbReference>
<dbReference type="SUPFAM" id="SSF50978">
    <property type="entry name" value="WD40 repeat-like"/>
    <property type="match status" value="1"/>
</dbReference>
<dbReference type="PROSITE" id="PS00678">
    <property type="entry name" value="WD_REPEATS_1"/>
    <property type="match status" value="1"/>
</dbReference>
<dbReference type="PROSITE" id="PS50082">
    <property type="entry name" value="WD_REPEATS_2"/>
    <property type="match status" value="4"/>
</dbReference>
<dbReference type="PROSITE" id="PS50294">
    <property type="entry name" value="WD_REPEATS_REGION"/>
    <property type="match status" value="1"/>
</dbReference>
<proteinExistence type="inferred from homology"/>
<gene>
    <name type="primary">eif3I</name>
    <name type="synonym">eif3s2</name>
    <name type="ORF">DDB_G0285683</name>
</gene>
<accession>Q54MT0</accession>
<name>EIF3I_DICDI</name>
<feature type="chain" id="PRO_0000329459" description="Eukaryotic translation initiation factor 3 subunit I">
    <location>
        <begin position="1"/>
        <end position="331"/>
    </location>
</feature>
<feature type="repeat" description="WD 1">
    <location>
        <begin position="8"/>
        <end position="47"/>
    </location>
</feature>
<feature type="repeat" description="WD 2">
    <location>
        <begin position="49"/>
        <end position="88"/>
    </location>
</feature>
<feature type="repeat" description="WD 3">
    <location>
        <begin position="142"/>
        <end position="181"/>
    </location>
</feature>
<feature type="repeat" description="WD 4">
    <location>
        <begin position="184"/>
        <end position="223"/>
    </location>
</feature>
<feature type="repeat" description="WD 5">
    <location>
        <begin position="281"/>
        <end position="320"/>
    </location>
</feature>